<comment type="function">
    <text evidence="1">Responsible for synthesis of pseudouridine from uracil-2457 in 23S ribosomal RNA.</text>
</comment>
<comment type="catalytic activity">
    <reaction>
        <text>uridine(2457) in 23S rRNA = pseudouridine(2457) in 23S rRNA</text>
        <dbReference type="Rhea" id="RHEA:38871"/>
        <dbReference type="Rhea" id="RHEA-COMP:10091"/>
        <dbReference type="Rhea" id="RHEA-COMP:10092"/>
        <dbReference type="ChEBI" id="CHEBI:65314"/>
        <dbReference type="ChEBI" id="CHEBI:65315"/>
        <dbReference type="EC" id="5.4.99.20"/>
    </reaction>
</comment>
<comment type="similarity">
    <text evidence="2">Belongs to the pseudouridine synthase RsuA family.</text>
</comment>
<comment type="sequence caution" evidence="2">
    <conflict type="erroneous initiation">
        <sequence resource="EMBL-CDS" id="AAN42771"/>
    </conflict>
</comment>
<comment type="sequence caution" evidence="2">
    <conflict type="erroneous initiation">
        <sequence resource="EMBL-CDS" id="AAP16660"/>
    </conflict>
</comment>
<proteinExistence type="inferred from homology"/>
<reference key="1">
    <citation type="journal article" date="2002" name="Nucleic Acids Res.">
        <title>Genome sequence of Shigella flexneri 2a: insights into pathogenicity through comparison with genomes of Escherichia coli K12 and O157.</title>
        <authorList>
            <person name="Jin Q."/>
            <person name="Yuan Z."/>
            <person name="Xu J."/>
            <person name="Wang Y."/>
            <person name="Shen Y."/>
            <person name="Lu W."/>
            <person name="Wang J."/>
            <person name="Liu H."/>
            <person name="Yang J."/>
            <person name="Yang F."/>
            <person name="Zhang X."/>
            <person name="Zhang J."/>
            <person name="Yang G."/>
            <person name="Wu H."/>
            <person name="Qu D."/>
            <person name="Dong J."/>
            <person name="Sun L."/>
            <person name="Xue Y."/>
            <person name="Zhao A."/>
            <person name="Gao Y."/>
            <person name="Zhu J."/>
            <person name="Kan B."/>
            <person name="Ding K."/>
            <person name="Chen S."/>
            <person name="Cheng H."/>
            <person name="Yao Z."/>
            <person name="He B."/>
            <person name="Chen R."/>
            <person name="Ma D."/>
            <person name="Qiang B."/>
            <person name="Wen Y."/>
            <person name="Hou Y."/>
            <person name="Yu J."/>
        </authorList>
    </citation>
    <scope>NUCLEOTIDE SEQUENCE [LARGE SCALE GENOMIC DNA]</scope>
    <source>
        <strain>301 / Serotype 2a</strain>
    </source>
</reference>
<reference key="2">
    <citation type="journal article" date="2003" name="Infect. Immun.">
        <title>Complete genome sequence and comparative genomics of Shigella flexneri serotype 2a strain 2457T.</title>
        <authorList>
            <person name="Wei J."/>
            <person name="Goldberg M.B."/>
            <person name="Burland V."/>
            <person name="Venkatesan M.M."/>
            <person name="Deng W."/>
            <person name="Fournier G."/>
            <person name="Mayhew G.F."/>
            <person name="Plunkett G. III"/>
            <person name="Rose D.J."/>
            <person name="Darling A."/>
            <person name="Mau B."/>
            <person name="Perna N.T."/>
            <person name="Payne S.M."/>
            <person name="Runyen-Janecky L.J."/>
            <person name="Zhou S."/>
            <person name="Schwartz D.C."/>
            <person name="Blattner F.R."/>
        </authorList>
    </citation>
    <scope>NUCLEOTIDE SEQUENCE [LARGE SCALE GENOMIC DNA]</scope>
    <source>
        <strain>ATCC 700930 / 2457T / Serotype 2a</strain>
    </source>
</reference>
<gene>
    <name type="primary">rluE</name>
    <name type="ordered locus">SF1154</name>
    <name type="ordered locus">S1237</name>
</gene>
<keyword id="KW-0413">Isomerase</keyword>
<keyword id="KW-1185">Reference proteome</keyword>
<keyword id="KW-0698">rRNA processing</keyword>
<sequence>MRQFIISENTMQKTSFRNHQVKRFSSQRSTRRKHENQPTRVILFNKPYDVLPQFTDETGRKTLKEFIPVQGVYAAGRLDRDSEGLLVLTNNGALQARLTQPGKRTGKIYYVQVEGIPTQDALEALRNGVTLNDGPTLPAGAELVDEPAWLWPRNPPIRERKSIPTSWLKITLYEGRNRQVRRMTAHVGFPTLRLIRYAMGDYSLDNLANGEWREVTD</sequence>
<feature type="chain" id="PRO_0000100009" description="Ribosomal large subunit pseudouridine synthase E">
    <location>
        <begin position="1"/>
        <end position="217"/>
    </location>
</feature>
<feature type="active site" description="Nucleophile" evidence="1">
    <location>
        <position position="79"/>
    </location>
</feature>
<organism>
    <name type="scientific">Shigella flexneri</name>
    <dbReference type="NCBI Taxonomy" id="623"/>
    <lineage>
        <taxon>Bacteria</taxon>
        <taxon>Pseudomonadati</taxon>
        <taxon>Pseudomonadota</taxon>
        <taxon>Gammaproteobacteria</taxon>
        <taxon>Enterobacterales</taxon>
        <taxon>Enterobacteriaceae</taxon>
        <taxon>Shigella</taxon>
    </lineage>
</organism>
<name>RLUE_SHIFL</name>
<protein>
    <recommendedName>
        <fullName>Ribosomal large subunit pseudouridine synthase E</fullName>
        <ecNumber>5.4.99.20</ecNumber>
    </recommendedName>
    <alternativeName>
        <fullName>rRNA pseudouridylate synthase E</fullName>
    </alternativeName>
    <alternativeName>
        <fullName>rRNA-uridine isomerase E</fullName>
    </alternativeName>
</protein>
<dbReference type="EC" id="5.4.99.20"/>
<dbReference type="EMBL" id="AE005674">
    <property type="protein sequence ID" value="AAN42771.1"/>
    <property type="status" value="ALT_INIT"/>
    <property type="molecule type" value="Genomic_DNA"/>
</dbReference>
<dbReference type="EMBL" id="AE014073">
    <property type="protein sequence ID" value="AAP16660.1"/>
    <property type="status" value="ALT_INIT"/>
    <property type="molecule type" value="Genomic_DNA"/>
</dbReference>
<dbReference type="RefSeq" id="WP_001248670.1">
    <property type="nucleotide sequence ID" value="NZ_WPGW01000001.1"/>
</dbReference>
<dbReference type="SMR" id="Q83LF6"/>
<dbReference type="STRING" id="198214.SF1154"/>
<dbReference type="PaxDb" id="198214-SF1154"/>
<dbReference type="KEGG" id="sfl:SF1154"/>
<dbReference type="KEGG" id="sfx:S1237"/>
<dbReference type="PATRIC" id="fig|198214.7.peg.1355"/>
<dbReference type="HOGENOM" id="CLU_024979_8_0_6"/>
<dbReference type="Proteomes" id="UP000001006">
    <property type="component" value="Chromosome"/>
</dbReference>
<dbReference type="Proteomes" id="UP000002673">
    <property type="component" value="Chromosome"/>
</dbReference>
<dbReference type="GO" id="GO:0160137">
    <property type="term" value="F:23S rRNA pseudouridine(2457) synthase activity"/>
    <property type="evidence" value="ECO:0007669"/>
    <property type="project" value="UniProtKB-EC"/>
</dbReference>
<dbReference type="GO" id="GO:0003723">
    <property type="term" value="F:RNA binding"/>
    <property type="evidence" value="ECO:0007669"/>
    <property type="project" value="InterPro"/>
</dbReference>
<dbReference type="GO" id="GO:0001522">
    <property type="term" value="P:pseudouridine synthesis"/>
    <property type="evidence" value="ECO:0007669"/>
    <property type="project" value="InterPro"/>
</dbReference>
<dbReference type="GO" id="GO:0006364">
    <property type="term" value="P:rRNA processing"/>
    <property type="evidence" value="ECO:0007669"/>
    <property type="project" value="UniProtKB-KW"/>
</dbReference>
<dbReference type="CDD" id="cd02566">
    <property type="entry name" value="PseudoU_synth_RluE"/>
    <property type="match status" value="1"/>
</dbReference>
<dbReference type="FunFam" id="3.30.70.1560:FF:000003">
    <property type="entry name" value="Pseudouridine synthase"/>
    <property type="match status" value="1"/>
</dbReference>
<dbReference type="FunFam" id="3.30.70.580:FF:000010">
    <property type="entry name" value="Pseudouridine synthase"/>
    <property type="match status" value="1"/>
</dbReference>
<dbReference type="Gene3D" id="3.30.70.1560">
    <property type="entry name" value="Alpha-L RNA-binding motif"/>
    <property type="match status" value="1"/>
</dbReference>
<dbReference type="Gene3D" id="3.30.70.580">
    <property type="entry name" value="Pseudouridine synthase I, catalytic domain, N-terminal subdomain"/>
    <property type="match status" value="1"/>
</dbReference>
<dbReference type="InterPro" id="IPR042092">
    <property type="entry name" value="PsdUridine_s_RsuA/RluB/E/F_cat"/>
</dbReference>
<dbReference type="InterPro" id="IPR020103">
    <property type="entry name" value="PsdUridine_synth_cat_dom_sf"/>
</dbReference>
<dbReference type="InterPro" id="IPR006145">
    <property type="entry name" value="PsdUridine_synth_RsuA/RluA"/>
</dbReference>
<dbReference type="InterPro" id="IPR000748">
    <property type="entry name" value="PsdUridine_synth_RsuA/RluB/E/F"/>
</dbReference>
<dbReference type="InterPro" id="IPR018496">
    <property type="entry name" value="PsdUridine_synth_RsuA/RluB_CS"/>
</dbReference>
<dbReference type="InterPro" id="IPR050343">
    <property type="entry name" value="RsuA_PseudoU_synthase"/>
</dbReference>
<dbReference type="InterPro" id="IPR020094">
    <property type="entry name" value="TruA/RsuA/RluB/E/F_N"/>
</dbReference>
<dbReference type="NCBIfam" id="NF008487">
    <property type="entry name" value="PRK11394.1"/>
    <property type="match status" value="1"/>
</dbReference>
<dbReference type="NCBIfam" id="TIGR00093">
    <property type="entry name" value="pseudouridine synthase"/>
    <property type="match status" value="1"/>
</dbReference>
<dbReference type="PANTHER" id="PTHR47683">
    <property type="entry name" value="PSEUDOURIDINE SYNTHASE FAMILY PROTEIN-RELATED"/>
    <property type="match status" value="1"/>
</dbReference>
<dbReference type="PANTHER" id="PTHR47683:SF2">
    <property type="entry name" value="RNA-BINDING S4 DOMAIN-CONTAINING PROTEIN"/>
    <property type="match status" value="1"/>
</dbReference>
<dbReference type="Pfam" id="PF00849">
    <property type="entry name" value="PseudoU_synth_2"/>
    <property type="match status" value="1"/>
</dbReference>
<dbReference type="SUPFAM" id="SSF55120">
    <property type="entry name" value="Pseudouridine synthase"/>
    <property type="match status" value="1"/>
</dbReference>
<dbReference type="PROSITE" id="PS01149">
    <property type="entry name" value="PSI_RSU"/>
    <property type="match status" value="1"/>
</dbReference>
<evidence type="ECO:0000250" key="1"/>
<evidence type="ECO:0000305" key="2"/>
<accession>Q83LF6</accession>